<keyword id="KW-1003">Cell membrane</keyword>
<keyword id="KW-0961">Cell wall biogenesis/degradation</keyword>
<keyword id="KW-0325">Glycoprotein</keyword>
<keyword id="KW-0328">Glycosyltransferase</keyword>
<keyword id="KW-0472">Membrane</keyword>
<keyword id="KW-1185">Reference proteome</keyword>
<keyword id="KW-0808">Transferase</keyword>
<keyword id="KW-0812">Transmembrane</keyword>
<keyword id="KW-1133">Transmembrane helix</keyword>
<organism>
    <name type="scientific">Emericella nidulans (strain FGSC A4 / ATCC 38163 / CBS 112.46 / NRRL 194 / M139)</name>
    <name type="common">Aspergillus nidulans</name>
    <dbReference type="NCBI Taxonomy" id="227321"/>
    <lineage>
        <taxon>Eukaryota</taxon>
        <taxon>Fungi</taxon>
        <taxon>Dikarya</taxon>
        <taxon>Ascomycota</taxon>
        <taxon>Pezizomycotina</taxon>
        <taxon>Eurotiomycetes</taxon>
        <taxon>Eurotiomycetidae</taxon>
        <taxon>Eurotiales</taxon>
        <taxon>Aspergillaceae</taxon>
        <taxon>Aspergillus</taxon>
        <taxon>Aspergillus subgen. Nidulantes</taxon>
    </lineage>
</organism>
<name>CHSD_EMENI</name>
<evidence type="ECO:0000255" key="1"/>
<evidence type="ECO:0000255" key="2">
    <source>
        <dbReference type="PROSITE-ProRule" id="PRU00498"/>
    </source>
</evidence>
<evidence type="ECO:0000256" key="3">
    <source>
        <dbReference type="SAM" id="MobiDB-lite"/>
    </source>
</evidence>
<evidence type="ECO:0000269" key="4">
    <source>
    </source>
</evidence>
<evidence type="ECO:0000269" key="5">
    <source>
    </source>
</evidence>
<evidence type="ECO:0000303" key="6">
    <source>
    </source>
</evidence>
<evidence type="ECO:0000305" key="7"/>
<evidence type="ECO:0000305" key="8">
    <source>
    </source>
</evidence>
<comment type="function">
    <text evidence="4 5 8">Polymerizes chitin, a structural polymer of the cell wall and septum, by transferring the sugar moiety of UDP-GlcNAc to the non-reducing end of the growing chitin polymer (Probable). Responsible for synthesis of 30-40% of the chitin in the cells (PubMed:8810520). ChsA and chsD play redundant functions in conidia formation (PubMed:8709948). The chitin synthesized by the chsD-encoded isozyme contributes to the rigidity of the walls of germinating conidia, of the subapical region of hyphae, and of conidiophore vesicles, but is not necessary for normal morphology of these cells (PubMed:8810520).</text>
</comment>
<comment type="catalytic activity">
    <reaction evidence="5">
        <text>[(1-&gt;4)-N-acetyl-beta-D-glucosaminyl](n) + UDP-N-acetyl-alpha-D-glucosamine = [(1-&gt;4)-N-acetyl-beta-D-glucosaminyl](n+1) + UDP + H(+)</text>
        <dbReference type="Rhea" id="RHEA:16637"/>
        <dbReference type="Rhea" id="RHEA-COMP:9593"/>
        <dbReference type="Rhea" id="RHEA-COMP:9595"/>
        <dbReference type="ChEBI" id="CHEBI:15378"/>
        <dbReference type="ChEBI" id="CHEBI:17029"/>
        <dbReference type="ChEBI" id="CHEBI:57705"/>
        <dbReference type="ChEBI" id="CHEBI:58223"/>
        <dbReference type="EC" id="2.4.1.16"/>
    </reaction>
    <physiologicalReaction direction="left-to-right" evidence="5">
        <dbReference type="Rhea" id="RHEA:16638"/>
    </physiologicalReaction>
</comment>
<comment type="subcellular location">
    <subcellularLocation>
        <location evidence="7">Cell membrane</location>
        <topology evidence="1">Multi-pass membrane protein</topology>
    </subcellularLocation>
</comment>
<comment type="disruption phenotype">
    <text evidence="4 5">Leads to reduced chitin content and vegetative cell lysis (PubMed:8810520). Results in a remarkable decrease in the efficiency of conidia formation, when chsA is also deleted (PubMed:8709948).</text>
</comment>
<comment type="similarity">
    <text evidence="7">Belongs to the chitin synthase family. Class V subfamily.</text>
</comment>
<comment type="sequence caution" evidence="7">
    <conflict type="erroneous gene model prediction">
        <sequence resource="EMBL-CDS" id="AAA97482"/>
    </conflict>
</comment>
<comment type="sequence caution" evidence="7">
    <conflict type="erroneous gene model prediction">
        <sequence resource="EMBL-CDS" id="BAA11866"/>
    </conflict>
</comment>
<comment type="sequence caution" evidence="7">
    <conflict type="erroneous gene model prediction">
        <sequence resource="EMBL-CDS" id="EAA64262"/>
    </conflict>
</comment>
<feature type="chain" id="PRO_0000193693" description="Chitin synthase C">
    <location>
        <begin position="1"/>
        <end position="1194"/>
    </location>
</feature>
<feature type="transmembrane region" description="Helical" evidence="1">
    <location>
        <begin position="221"/>
        <end position="241"/>
    </location>
</feature>
<feature type="transmembrane region" description="Helical" evidence="1">
    <location>
        <begin position="476"/>
        <end position="496"/>
    </location>
</feature>
<feature type="transmembrane region" description="Helical" evidence="1">
    <location>
        <begin position="1039"/>
        <end position="1059"/>
    </location>
</feature>
<feature type="transmembrane region" description="Helical" evidence="1">
    <location>
        <begin position="1073"/>
        <end position="1093"/>
    </location>
</feature>
<feature type="transmembrane region" description="Helical" evidence="1">
    <location>
        <begin position="1097"/>
        <end position="1117"/>
    </location>
</feature>
<feature type="region of interest" description="Disordered" evidence="3">
    <location>
        <begin position="1"/>
        <end position="91"/>
    </location>
</feature>
<feature type="region of interest" description="Disordered" evidence="3">
    <location>
        <begin position="136"/>
        <end position="177"/>
    </location>
</feature>
<feature type="compositionally biased region" description="Basic and acidic residues" evidence="3">
    <location>
        <begin position="12"/>
        <end position="23"/>
    </location>
</feature>
<feature type="compositionally biased region" description="Basic residues" evidence="3">
    <location>
        <begin position="42"/>
        <end position="54"/>
    </location>
</feature>
<feature type="compositionally biased region" description="Basic and acidic residues" evidence="3">
    <location>
        <begin position="55"/>
        <end position="69"/>
    </location>
</feature>
<feature type="compositionally biased region" description="Basic and acidic residues" evidence="3">
    <location>
        <begin position="76"/>
        <end position="85"/>
    </location>
</feature>
<feature type="compositionally biased region" description="Basic residues" evidence="3">
    <location>
        <begin position="150"/>
        <end position="164"/>
    </location>
</feature>
<feature type="glycosylation site" description="N-linked (GlcNAc...) asparagine" evidence="2">
    <location>
        <position position="351"/>
    </location>
</feature>
<feature type="glycosylation site" description="N-linked (GlcNAc...) asparagine" evidence="2">
    <location>
        <position position="390"/>
    </location>
</feature>
<feature type="glycosylation site" description="N-linked (GlcNAc...) asparagine" evidence="2">
    <location>
        <position position="582"/>
    </location>
</feature>
<feature type="glycosylation site" description="N-linked (GlcNAc...) asparagine" evidence="2">
    <location>
        <position position="608"/>
    </location>
</feature>
<feature type="glycosylation site" description="N-linked (GlcNAc...) asparagine" evidence="2">
    <location>
        <position position="885"/>
    </location>
</feature>
<feature type="glycosylation site" description="N-linked (GlcNAc...) asparagine" evidence="2">
    <location>
        <position position="1014"/>
    </location>
</feature>
<feature type="sequence conflict" description="In Ref. 1; BAA11866 and 4; AAA97482." evidence="7" ref="1 4">
    <original>L</original>
    <variation>S</variation>
    <location>
        <position position="606"/>
    </location>
</feature>
<dbReference type="EC" id="2.4.1.16" evidence="8"/>
<dbReference type="EMBL" id="D83246">
    <property type="protein sequence ID" value="BAA11866.2"/>
    <property type="status" value="ALT_SEQ"/>
    <property type="molecule type" value="Genomic_DNA"/>
</dbReference>
<dbReference type="EMBL" id="U52362">
    <property type="protein sequence ID" value="AAA97482.1"/>
    <property type="status" value="ALT_SEQ"/>
    <property type="molecule type" value="Genomic_DNA"/>
</dbReference>
<dbReference type="EMBL" id="AACD01000025">
    <property type="protein sequence ID" value="EAA64262.1"/>
    <property type="status" value="ALT_SEQ"/>
    <property type="molecule type" value="Genomic_DNA"/>
</dbReference>
<dbReference type="EMBL" id="BN001307">
    <property type="protein sequence ID" value="CBF85100.1"/>
    <property type="molecule type" value="Genomic_DNA"/>
</dbReference>
<dbReference type="PIR" id="JC6079">
    <property type="entry name" value="JC6079"/>
</dbReference>
<dbReference type="RefSeq" id="XP_659159.1">
    <property type="nucleotide sequence ID" value="XM_654067.1"/>
</dbReference>
<dbReference type="FunCoup" id="P78611">
    <property type="interactions" value="65"/>
</dbReference>
<dbReference type="STRING" id="227321.P78611"/>
<dbReference type="CAZy" id="GT2">
    <property type="family name" value="Glycosyltransferase Family 2"/>
</dbReference>
<dbReference type="EnsemblFungi" id="CBF85100">
    <property type="protein sequence ID" value="CBF85100"/>
    <property type="gene ID" value="ANIA_01555"/>
</dbReference>
<dbReference type="KEGG" id="ani:ANIA_01555"/>
<dbReference type="VEuPathDB" id="FungiDB:AN1555"/>
<dbReference type="eggNOG" id="KOG2571">
    <property type="taxonomic scope" value="Eukaryota"/>
</dbReference>
<dbReference type="HOGENOM" id="CLU_002572_1_0_1"/>
<dbReference type="InParanoid" id="P78611"/>
<dbReference type="OMA" id="DIMGLCG"/>
<dbReference type="OrthoDB" id="370884at2759"/>
<dbReference type="BRENDA" id="2.4.1.16">
    <property type="organism ID" value="517"/>
</dbReference>
<dbReference type="Proteomes" id="UP000000560">
    <property type="component" value="Chromosome VII"/>
</dbReference>
<dbReference type="GO" id="GO:0071944">
    <property type="term" value="C:cell periphery"/>
    <property type="evidence" value="ECO:0000318"/>
    <property type="project" value="GO_Central"/>
</dbReference>
<dbReference type="GO" id="GO:0030428">
    <property type="term" value="C:cell septum"/>
    <property type="evidence" value="ECO:0000318"/>
    <property type="project" value="GO_Central"/>
</dbReference>
<dbReference type="GO" id="GO:0005935">
    <property type="term" value="C:cellular bud neck"/>
    <property type="evidence" value="ECO:0007669"/>
    <property type="project" value="EnsemblFungi"/>
</dbReference>
<dbReference type="GO" id="GO:0045009">
    <property type="term" value="C:chitosome"/>
    <property type="evidence" value="ECO:0007669"/>
    <property type="project" value="EnsemblFungi"/>
</dbReference>
<dbReference type="GO" id="GO:0000131">
    <property type="term" value="C:incipient cellular bud site"/>
    <property type="evidence" value="ECO:0007669"/>
    <property type="project" value="EnsemblFungi"/>
</dbReference>
<dbReference type="GO" id="GO:0005886">
    <property type="term" value="C:plasma membrane"/>
    <property type="evidence" value="ECO:0007669"/>
    <property type="project" value="UniProtKB-SubCell"/>
</dbReference>
<dbReference type="GO" id="GO:0005628">
    <property type="term" value="C:prospore membrane"/>
    <property type="evidence" value="ECO:0007669"/>
    <property type="project" value="EnsemblFungi"/>
</dbReference>
<dbReference type="GO" id="GO:0004100">
    <property type="term" value="F:chitin synthase activity"/>
    <property type="evidence" value="ECO:0000315"/>
    <property type="project" value="AspGD"/>
</dbReference>
<dbReference type="GO" id="GO:0030476">
    <property type="term" value="P:ascospore wall assembly"/>
    <property type="evidence" value="ECO:0007669"/>
    <property type="project" value="EnsemblFungi"/>
</dbReference>
<dbReference type="GO" id="GO:0043936">
    <property type="term" value="P:asexual sporulation resulting in formation of a cellular spore"/>
    <property type="evidence" value="ECO:0000316"/>
    <property type="project" value="AspGD"/>
</dbReference>
<dbReference type="GO" id="GO:0006031">
    <property type="term" value="P:chitin biosynthetic process"/>
    <property type="evidence" value="ECO:0000315"/>
    <property type="project" value="AspGD"/>
</dbReference>
<dbReference type="GO" id="GO:0048315">
    <property type="term" value="P:conidium formation"/>
    <property type="evidence" value="ECO:0000316"/>
    <property type="project" value="AspGD"/>
</dbReference>
<dbReference type="GO" id="GO:0097271">
    <property type="term" value="P:protein localization to bud neck"/>
    <property type="evidence" value="ECO:0007669"/>
    <property type="project" value="EnsemblFungi"/>
</dbReference>
<dbReference type="CDD" id="cd04190">
    <property type="entry name" value="Chitin_synth_C"/>
    <property type="match status" value="1"/>
</dbReference>
<dbReference type="Gene3D" id="3.90.550.10">
    <property type="entry name" value="Spore Coat Polysaccharide Biosynthesis Protein SpsA, Chain A"/>
    <property type="match status" value="1"/>
</dbReference>
<dbReference type="InterPro" id="IPR004835">
    <property type="entry name" value="Chitin_synth"/>
</dbReference>
<dbReference type="InterPro" id="IPR054295">
    <property type="entry name" value="CHS4-like_dom"/>
</dbReference>
<dbReference type="InterPro" id="IPR029044">
    <property type="entry name" value="Nucleotide-diphossugar_trans"/>
</dbReference>
<dbReference type="PANTHER" id="PTHR22914">
    <property type="entry name" value="CHITIN SYNTHASE"/>
    <property type="match status" value="1"/>
</dbReference>
<dbReference type="PANTHER" id="PTHR22914:SF16">
    <property type="entry name" value="CHITIN SYNTHASE 3"/>
    <property type="match status" value="1"/>
</dbReference>
<dbReference type="Pfam" id="PF03142">
    <property type="entry name" value="Chitin_synth_2"/>
    <property type="match status" value="1"/>
</dbReference>
<dbReference type="Pfam" id="PF22997">
    <property type="entry name" value="CHS4"/>
    <property type="match status" value="1"/>
</dbReference>
<dbReference type="SUPFAM" id="SSF53448">
    <property type="entry name" value="Nucleotide-diphospho-sugar transferases"/>
    <property type="match status" value="1"/>
</dbReference>
<protein>
    <recommendedName>
        <fullName evidence="6">Chitin synthase C</fullName>
        <ecNumber evidence="8">2.4.1.16</ecNumber>
    </recommendedName>
    <alternativeName>
        <fullName evidence="7">Chitin-UDP acetyl-glucosaminyl transferase C</fullName>
    </alternativeName>
    <alternativeName>
        <fullName evidence="6">Class-V chitin synthase C</fullName>
    </alternativeName>
</protein>
<proteinExistence type="evidence at protein level"/>
<gene>
    <name evidence="6" type="primary">chsD</name>
    <name type="synonym">chsE</name>
    <name type="ORF">AN1555</name>
</gene>
<sequence>MSLPQRPGKTSPRREETSAFREPSRRRRRESDSLSNNDPTSPRHHRHHRSHSSRHQHDIDEERAEEGGIRRKRSLVKPERGRMDPSHPNYLYRQKTQNMPTYNPMTGNEPLIHEEGEAETNSTPSMDSKRKDALYGAHGNVNKPMERVPTRHRSKKRKGSRKISKREAAAEKRRRKAMEQVRPPSLWTTYCSVITFWAPDFVLKCFGMPQKAQRSAWREKIGLISIILMIAAFVGFLTFGFTATVCGTPPTRLKINEIGSGYMIFHGQAYDLTKSTHPAAAGIPDMTNVLYDLPHKYGGQDGSFFFQEVNGACKGLITRTENSDIPTNSNGDLAWYFPCHAFNQDGSSEPNTTVSYYNGWACHTSGSARKSFYSLKNSGDVYFTWEDTKNTSRKLAVYSGNVLDLNLLNWFDDTQVNYPTKFKDLRDNDDIRGVDLTYYFQTGEDKQIGKCLSQIIKVGSIDTDTVGCIASQVVLYVSLIFILSIVIVKFAFALLFQWFLAPRFAAQKTSMGAVDSKARNQQIEDWSNDIYRPGPRLADPVPGDRMSKRASFLPTTSRFSSPYTVSNGGKQKPQWVTMASQNSTTRLVPPASGTTPSIYRQSHNGLGNVSVDNSRLNPSASRTSLVQDSRYSTVIPDSEGIGSAGYVHELVVPQPPPDWQPYGFPLAHAMCLVTCYSEGEEGIRTTLDSIALTDYPNSHKSIVVICDGIIKGKGEEFSTPDIVLRMMRDPIIPPEEVEAFSYVAVATGSKRHNMAKVYAGFYDYGEHSIIPVEKQQRVPMMIIVKCGTPAEATAAKPGNRGKRDSQIILMSFLQKVMFDERMTELEYEMFNGLLHVTGIPPDFYEVVLMVDADTKVFPDSLTHMISAMVKDPEVMGLCGETKIANKTDSWVTMIQVFEYFVSHHQSKAFESVFGGVTCLPGCFSMYRIKAPKGGQNYWVPILANPDIVEHYSENVVDTLHKKNLLLLGEDRYLSTLMLRTFPKRKQIFVPQAVCKTVVPDKFMVLLSQRRRWINSTVHNLMELVLVRDLCGTFCFSMQFVIFVELVGTVVLPAAISFTIYVVVSSIIKQPVQIIPLVLLALILGLPGVLVVVTAHRLVYVLWMLVYLISLPIWNFVLPTYAYWKFDDFSWGDTRKTAGEKDKGHEDGEGEFDSSKITMKRWRDFEKDRRLRMQAGWQLPVGGHPPMPYEPYPEY</sequence>
<accession>P78611</accession>
<accession>C8VMZ3</accession>
<accession>Q00744</accession>
<accession>Q5BD25</accession>
<reference key="1">
    <citation type="journal article" date="1996" name="Mol. Gen. Genet.">
        <title>The Aspergillus nidulans genes chsA and chsD encode chitin synthases which have redundant functions in conidia formation.</title>
        <authorList>
            <person name="Motoyama T."/>
            <person name="Fujiwara M."/>
            <person name="Kojima N."/>
            <person name="Horiuchi H."/>
            <person name="Ohta A."/>
            <person name="Takagi M."/>
        </authorList>
    </citation>
    <scope>NUCLEOTIDE SEQUENCE [GENOMIC DNA]</scope>
    <scope>FUNCTION</scope>
    <scope>DISRUPTION PHENOTYPE</scope>
    <source>
        <strain>FGSC 89</strain>
    </source>
</reference>
<reference key="2">
    <citation type="journal article" date="1997" name="Mol. Gen. Genet.">
        <authorList>
            <person name="Motoyama T."/>
            <person name="Fujiwara M."/>
            <person name="Kojima N."/>
            <person name="Horiuchi H."/>
            <person name="Ohta A."/>
            <person name="Takagi M."/>
        </authorList>
    </citation>
    <scope>ERRATUM OF PUBMED:8709948</scope>
</reference>
<reference key="3">
    <citation type="submission" date="2000-02" db="EMBL/GenBank/DDBJ databases">
        <authorList>
            <person name="Motoyama T."/>
            <person name="Fujiwara M."/>
            <person name="Kojima N."/>
            <person name="Horiuchi H."/>
            <person name="Ohta A."/>
            <person name="Takagi M."/>
        </authorList>
    </citation>
    <scope>SEQUENCE REVISION</scope>
</reference>
<reference key="4">
    <citation type="journal article" date="1996" name="Fungal Genet. Biol.">
        <title>The chsD and chsE genes of Aspergillus nidulans and their roles in chitin synthesis.</title>
        <authorList>
            <person name="Specht C.A."/>
            <person name="Liu Y."/>
            <person name="Robbins P.W."/>
            <person name="Bulawa C.E."/>
            <person name="Iartchouk N."/>
            <person name="Winter K.R."/>
            <person name="Riggle P.J."/>
            <person name="Rhodes J.C."/>
            <person name="Dodge C.L."/>
            <person name="Culp D.W."/>
            <person name="Borgia P.T."/>
        </authorList>
    </citation>
    <scope>NUCLEOTIDE SEQUENCE [GENOMIC DNA]</scope>
    <scope>FUNCTION</scope>
    <scope>DISRUPTION PHENOTYPE</scope>
    <scope>CATALYTIC ACTIVITY</scope>
    <source>
        <strain>FGSC A4 / ATCC 38163 / CBS 112.46 / NRRL 194 / M139</strain>
    </source>
</reference>
<reference key="5">
    <citation type="journal article" date="2005" name="Nature">
        <title>Sequencing of Aspergillus nidulans and comparative analysis with A. fumigatus and A. oryzae.</title>
        <authorList>
            <person name="Galagan J.E."/>
            <person name="Calvo S.E."/>
            <person name="Cuomo C."/>
            <person name="Ma L.-J."/>
            <person name="Wortman J.R."/>
            <person name="Batzoglou S."/>
            <person name="Lee S.-I."/>
            <person name="Bastuerkmen M."/>
            <person name="Spevak C.C."/>
            <person name="Clutterbuck J."/>
            <person name="Kapitonov V."/>
            <person name="Jurka J."/>
            <person name="Scazzocchio C."/>
            <person name="Farman M.L."/>
            <person name="Butler J."/>
            <person name="Purcell S."/>
            <person name="Harris S."/>
            <person name="Braus G.H."/>
            <person name="Draht O."/>
            <person name="Busch S."/>
            <person name="D'Enfert C."/>
            <person name="Bouchier C."/>
            <person name="Goldman G.H."/>
            <person name="Bell-Pedersen D."/>
            <person name="Griffiths-Jones S."/>
            <person name="Doonan J.H."/>
            <person name="Yu J."/>
            <person name="Vienken K."/>
            <person name="Pain A."/>
            <person name="Freitag M."/>
            <person name="Selker E.U."/>
            <person name="Archer D.B."/>
            <person name="Penalva M.A."/>
            <person name="Oakley B.R."/>
            <person name="Momany M."/>
            <person name="Tanaka T."/>
            <person name="Kumagai T."/>
            <person name="Asai K."/>
            <person name="Machida M."/>
            <person name="Nierman W.C."/>
            <person name="Denning D.W."/>
            <person name="Caddick M.X."/>
            <person name="Hynes M."/>
            <person name="Paoletti M."/>
            <person name="Fischer R."/>
            <person name="Miller B.L."/>
            <person name="Dyer P.S."/>
            <person name="Sachs M.S."/>
            <person name="Osmani S.A."/>
            <person name="Birren B.W."/>
        </authorList>
    </citation>
    <scope>NUCLEOTIDE SEQUENCE [LARGE SCALE GENOMIC DNA]</scope>
    <source>
        <strain>FGSC A4 / ATCC 38163 / CBS 112.46 / NRRL 194 / M139</strain>
    </source>
</reference>
<reference key="6">
    <citation type="journal article" date="2009" name="Fungal Genet. Biol.">
        <title>The 2008 update of the Aspergillus nidulans genome annotation: a community effort.</title>
        <authorList>
            <person name="Wortman J.R."/>
            <person name="Gilsenan J.M."/>
            <person name="Joardar V."/>
            <person name="Deegan J."/>
            <person name="Clutterbuck J."/>
            <person name="Andersen M.R."/>
            <person name="Archer D."/>
            <person name="Bencina M."/>
            <person name="Braus G."/>
            <person name="Coutinho P."/>
            <person name="von Dohren H."/>
            <person name="Doonan J."/>
            <person name="Driessen A.J."/>
            <person name="Durek P."/>
            <person name="Espeso E."/>
            <person name="Fekete E."/>
            <person name="Flipphi M."/>
            <person name="Estrada C.G."/>
            <person name="Geysens S."/>
            <person name="Goldman G."/>
            <person name="de Groot P.W."/>
            <person name="Hansen K."/>
            <person name="Harris S.D."/>
            <person name="Heinekamp T."/>
            <person name="Helmstaedt K."/>
            <person name="Henrissat B."/>
            <person name="Hofmann G."/>
            <person name="Homan T."/>
            <person name="Horio T."/>
            <person name="Horiuchi H."/>
            <person name="James S."/>
            <person name="Jones M."/>
            <person name="Karaffa L."/>
            <person name="Karanyi Z."/>
            <person name="Kato M."/>
            <person name="Keller N."/>
            <person name="Kelly D.E."/>
            <person name="Kiel J.A."/>
            <person name="Kim J.M."/>
            <person name="van der Klei I.J."/>
            <person name="Klis F.M."/>
            <person name="Kovalchuk A."/>
            <person name="Krasevec N."/>
            <person name="Kubicek C.P."/>
            <person name="Liu B."/>
            <person name="Maccabe A."/>
            <person name="Meyer V."/>
            <person name="Mirabito P."/>
            <person name="Miskei M."/>
            <person name="Mos M."/>
            <person name="Mullins J."/>
            <person name="Nelson D.R."/>
            <person name="Nielsen J."/>
            <person name="Oakley B.R."/>
            <person name="Osmani S.A."/>
            <person name="Pakula T."/>
            <person name="Paszewski A."/>
            <person name="Paulsen I."/>
            <person name="Pilsyk S."/>
            <person name="Pocsi I."/>
            <person name="Punt P.J."/>
            <person name="Ram A.F."/>
            <person name="Ren Q."/>
            <person name="Robellet X."/>
            <person name="Robson G."/>
            <person name="Seiboth B."/>
            <person name="van Solingen P."/>
            <person name="Specht T."/>
            <person name="Sun J."/>
            <person name="Taheri-Talesh N."/>
            <person name="Takeshita N."/>
            <person name="Ussery D."/>
            <person name="vanKuyk P.A."/>
            <person name="Visser H."/>
            <person name="van de Vondervoort P.J."/>
            <person name="de Vries R.P."/>
            <person name="Walton J."/>
            <person name="Xiang X."/>
            <person name="Xiong Y."/>
            <person name="Zeng A.P."/>
            <person name="Brandt B.W."/>
            <person name="Cornell M.J."/>
            <person name="van den Hondel C.A."/>
            <person name="Visser J."/>
            <person name="Oliver S.G."/>
            <person name="Turner G."/>
        </authorList>
    </citation>
    <scope>GENOME REANNOTATION</scope>
    <source>
        <strain>FGSC A4 / ATCC 38163 / CBS 112.46 / NRRL 194 / M139</strain>
    </source>
</reference>